<gene>
    <name evidence="1" type="primary">yqhA</name>
    <name type="ordered locus">ECDH10B_3179</name>
</gene>
<proteinExistence type="inferred from homology"/>
<organism>
    <name type="scientific">Escherichia coli (strain K12 / DH10B)</name>
    <dbReference type="NCBI Taxonomy" id="316385"/>
    <lineage>
        <taxon>Bacteria</taxon>
        <taxon>Pseudomonadati</taxon>
        <taxon>Pseudomonadota</taxon>
        <taxon>Gammaproteobacteria</taxon>
        <taxon>Enterobacterales</taxon>
        <taxon>Enterobacteriaceae</taxon>
        <taxon>Escherichia</taxon>
    </lineage>
</organism>
<reference key="1">
    <citation type="journal article" date="2008" name="J. Bacteriol.">
        <title>The complete genome sequence of Escherichia coli DH10B: insights into the biology of a laboratory workhorse.</title>
        <authorList>
            <person name="Durfee T."/>
            <person name="Nelson R."/>
            <person name="Baldwin S."/>
            <person name="Plunkett G. III"/>
            <person name="Burland V."/>
            <person name="Mau B."/>
            <person name="Petrosino J.F."/>
            <person name="Qin X."/>
            <person name="Muzny D.M."/>
            <person name="Ayele M."/>
            <person name="Gibbs R.A."/>
            <person name="Csorgo B."/>
            <person name="Posfai G."/>
            <person name="Weinstock G.M."/>
            <person name="Blattner F.R."/>
        </authorList>
    </citation>
    <scope>NUCLEOTIDE SEQUENCE [LARGE SCALE GENOMIC DNA]</scope>
    <source>
        <strain>K12 / DH10B</strain>
    </source>
</reference>
<dbReference type="EMBL" id="CP000948">
    <property type="protein sequence ID" value="ACB04090.1"/>
    <property type="molecule type" value="Genomic_DNA"/>
</dbReference>
<dbReference type="RefSeq" id="WP_000439331.1">
    <property type="nucleotide sequence ID" value="NC_010473.1"/>
</dbReference>
<dbReference type="KEGG" id="ecd:ECDH10B_3179"/>
<dbReference type="HOGENOM" id="CLU_097887_1_1_6"/>
<dbReference type="GO" id="GO:0005886">
    <property type="term" value="C:plasma membrane"/>
    <property type="evidence" value="ECO:0007669"/>
    <property type="project" value="UniProtKB-SubCell"/>
</dbReference>
<dbReference type="HAMAP" id="MF_00143">
    <property type="entry name" value="UPF0114"/>
    <property type="match status" value="1"/>
</dbReference>
<dbReference type="InterPro" id="IPR005134">
    <property type="entry name" value="UPF0114"/>
</dbReference>
<dbReference type="InterPro" id="IPR020761">
    <property type="entry name" value="UPF0114_bac"/>
</dbReference>
<dbReference type="NCBIfam" id="TIGR00645">
    <property type="entry name" value="HI0507"/>
    <property type="match status" value="1"/>
</dbReference>
<dbReference type="PANTHER" id="PTHR38596">
    <property type="entry name" value="UPF0114 PROTEIN YQHA"/>
    <property type="match status" value="1"/>
</dbReference>
<dbReference type="PANTHER" id="PTHR38596:SF1">
    <property type="entry name" value="UPF0114 PROTEIN YQHA"/>
    <property type="match status" value="1"/>
</dbReference>
<dbReference type="Pfam" id="PF03350">
    <property type="entry name" value="UPF0114"/>
    <property type="match status" value="1"/>
</dbReference>
<keyword id="KW-1003">Cell membrane</keyword>
<keyword id="KW-0472">Membrane</keyword>
<keyword id="KW-0812">Transmembrane</keyword>
<keyword id="KW-1133">Transmembrane helix</keyword>
<name>YQHA_ECODH</name>
<evidence type="ECO:0000255" key="1">
    <source>
        <dbReference type="HAMAP-Rule" id="MF_00143"/>
    </source>
</evidence>
<sequence length="164" mass="18641">MERFLENAMYASRWLLAPVYFGLSLALVALALKFFQEIIHVLPNIFSMAESDLILVLLSLVDMTLVGGLLVMVMFSGYENFVSQLDISENKEKLNWLGKMDATSLKNKVAASIVAISSIHLLRVFMDAKNVPDNKLMWYVIIHLTFVLSAFVMGYLDRLTRHNH</sequence>
<comment type="subcellular location">
    <subcellularLocation>
        <location evidence="1">Cell membrane</location>
        <topology evidence="1">Multi-pass membrane protein</topology>
    </subcellularLocation>
</comment>
<comment type="similarity">
    <text evidence="1">Belongs to the UPF0114 family.</text>
</comment>
<feature type="chain" id="PRO_1000096265" description="UPF0114 protein YqhA">
    <location>
        <begin position="1"/>
        <end position="164"/>
    </location>
</feature>
<feature type="transmembrane region" description="Helical" evidence="1">
    <location>
        <begin position="15"/>
        <end position="35"/>
    </location>
</feature>
<feature type="transmembrane region" description="Helical" evidence="1">
    <location>
        <begin position="53"/>
        <end position="73"/>
    </location>
</feature>
<feature type="transmembrane region" description="Helical" evidence="1">
    <location>
        <begin position="136"/>
        <end position="156"/>
    </location>
</feature>
<accession>B1XFF6</accession>
<protein>
    <recommendedName>
        <fullName evidence="1">UPF0114 protein YqhA</fullName>
    </recommendedName>
</protein>